<comment type="function">
    <text evidence="5">Probably participates in a plant defense mechanism.</text>
</comment>
<comment type="tissue specificity">
    <text evidence="4">Expressed in leaves, petals, petioles, and runners but not in roots (at protein level).</text>
</comment>
<comment type="domain">
    <text evidence="1">The presence of a 'disulfide through disulfide knot' structurally defines this protein as a knottin.</text>
</comment>
<comment type="PTM">
    <text evidence="2 3">This is a cyclic peptide.</text>
</comment>
<comment type="mass spectrometry" mass="3149.4" method="MALDI" evidence="3"/>
<comment type="similarity">
    <text evidence="2">Belongs to the cyclotide family. Bracelet subfamily.</text>
</comment>
<comment type="caution">
    <text evidence="3">This peptide is cyclic. The start position was chosen by similarity to OAK1 (kalata-B1) for which the DNA sequence is known.</text>
</comment>
<evidence type="ECO:0000250" key="1">
    <source>
        <dbReference type="UniProtKB" id="P56871"/>
    </source>
</evidence>
<evidence type="ECO:0000255" key="2">
    <source>
        <dbReference type="PROSITE-ProRule" id="PRU00395"/>
    </source>
</evidence>
<evidence type="ECO:0000269" key="3">
    <source>
    </source>
</evidence>
<evidence type="ECO:0000269" key="4">
    <source>
    </source>
</evidence>
<evidence type="ECO:0000305" key="5"/>
<organism>
    <name type="scientific">Viola odorata</name>
    <name type="common">Sweet violet</name>
    <dbReference type="NCBI Taxonomy" id="97441"/>
    <lineage>
        <taxon>Eukaryota</taxon>
        <taxon>Viridiplantae</taxon>
        <taxon>Streptophyta</taxon>
        <taxon>Embryophyta</taxon>
        <taxon>Tracheophyta</taxon>
        <taxon>Spermatophyta</taxon>
        <taxon>Magnoliopsida</taxon>
        <taxon>eudicotyledons</taxon>
        <taxon>Gunneridae</taxon>
        <taxon>Pentapetalae</taxon>
        <taxon>rosids</taxon>
        <taxon>fabids</taxon>
        <taxon>Malpighiales</taxon>
        <taxon>Violaceae</taxon>
        <taxon>Viola</taxon>
        <taxon>Viola subgen. Viola</taxon>
        <taxon>Viola sect. Viola</taxon>
        <taxon>Viola subsect. Viola</taxon>
    </lineage>
</organism>
<sequence length="30" mass="3176">GIPCGESCVWIPCISAAIGCSCKNKVCYRN</sequence>
<name>CYO17_VIOOD</name>
<protein>
    <recommendedName>
        <fullName>Cycloviolacin-O17</fullName>
    </recommendedName>
</protein>
<keyword id="KW-0903">Direct protein sequencing</keyword>
<keyword id="KW-1015">Disulfide bond</keyword>
<keyword id="KW-0960">Knottin</keyword>
<keyword id="KW-0611">Plant defense</keyword>
<reference evidence="5" key="1">
    <citation type="journal article" date="2006" name="Biochem. J.">
        <title>A novel suite of cyclotides from Viola odorata: sequence variation and the implications for structure, function and stability.</title>
        <authorList>
            <person name="Ireland D.C."/>
            <person name="Colgrave M.L."/>
            <person name="Craik D.J."/>
        </authorList>
    </citation>
    <scope>PROTEIN SEQUENCE</scope>
    <scope>MASS SPECTROMETRY</scope>
</reference>
<reference key="2">
    <citation type="journal article" date="2017" name="J. Nat. Prod.">
        <title>Cyclotides from the Indian Medicinal Plant Viola odorata (Banafsha): Identification and Characterization.</title>
        <authorList>
            <person name="Narayani M."/>
            <person name="Chadha A."/>
            <person name="Srivastava S."/>
        </authorList>
    </citation>
    <scope>TISSUE SPECIFICITY</scope>
    <scope>IDENTIFICATION BY MASS SPECTROMETRY</scope>
</reference>
<accession>P85180</accession>
<feature type="peptide" id="PRO_0000294946" description="Cycloviolacin-O17" evidence="2 3">
    <location>
        <begin position="1"/>
        <end position="30"/>
    </location>
</feature>
<feature type="disulfide bond" evidence="1 2">
    <location>
        <begin position="4"/>
        <end position="20"/>
    </location>
</feature>
<feature type="disulfide bond" evidence="1 2">
    <location>
        <begin position="8"/>
        <end position="22"/>
    </location>
</feature>
<feature type="disulfide bond" evidence="1 2">
    <location>
        <begin position="13"/>
        <end position="27"/>
    </location>
</feature>
<feature type="cross-link" description="Cyclopeptide (Gly-Asn)" evidence="3">
    <location>
        <begin position="1"/>
        <end position="30"/>
    </location>
</feature>
<proteinExistence type="evidence at protein level"/>
<dbReference type="SMR" id="P85180"/>
<dbReference type="GO" id="GO:0006952">
    <property type="term" value="P:defense response"/>
    <property type="evidence" value="ECO:0007669"/>
    <property type="project" value="UniProtKB-KW"/>
</dbReference>
<dbReference type="InterPro" id="IPR005535">
    <property type="entry name" value="Cyclotide"/>
</dbReference>
<dbReference type="InterPro" id="IPR012323">
    <property type="entry name" value="Cyclotide_bracelet_CS"/>
</dbReference>
<dbReference type="InterPro" id="IPR036146">
    <property type="entry name" value="Cyclotide_sf"/>
</dbReference>
<dbReference type="Pfam" id="PF03784">
    <property type="entry name" value="Cyclotide"/>
    <property type="match status" value="1"/>
</dbReference>
<dbReference type="PIRSF" id="PIRSF037891">
    <property type="entry name" value="Cycloviolacin"/>
    <property type="match status" value="1"/>
</dbReference>
<dbReference type="SUPFAM" id="SSF57038">
    <property type="entry name" value="Cyclotides"/>
    <property type="match status" value="1"/>
</dbReference>
<dbReference type="PROSITE" id="PS51052">
    <property type="entry name" value="CYCLOTIDE"/>
    <property type="match status" value="1"/>
</dbReference>
<dbReference type="PROSITE" id="PS60008">
    <property type="entry name" value="CYCLOTIDE_BRACELET"/>
    <property type="match status" value="1"/>
</dbReference>